<accession>Q9LS46</accession>
<dbReference type="EMBL" id="AB026658">
    <property type="protein sequence ID" value="BAB01110.1"/>
    <property type="molecule type" value="Genomic_DNA"/>
</dbReference>
<dbReference type="EMBL" id="CP002686">
    <property type="protein sequence ID" value="AEE76098.1"/>
    <property type="molecule type" value="Genomic_DNA"/>
</dbReference>
<dbReference type="EMBL" id="AY099663">
    <property type="protein sequence ID" value="AAM20514.1"/>
    <property type="molecule type" value="mRNA"/>
</dbReference>
<dbReference type="EMBL" id="BT000258">
    <property type="protein sequence ID" value="AAN15577.1"/>
    <property type="molecule type" value="mRNA"/>
</dbReference>
<dbReference type="RefSeq" id="NP_188473.1">
    <property type="nucleotide sequence ID" value="NM_112729.4"/>
</dbReference>
<dbReference type="PDB" id="8HIW">
    <property type="method" value="EM"/>
    <property type="resolution" value="3.34 A"/>
    <property type="chains" value="A/B=1-598"/>
</dbReference>
<dbReference type="PDB" id="8HIY">
    <property type="method" value="EM"/>
    <property type="resolution" value="3.80 A"/>
    <property type="chains" value="A/B=1-598"/>
</dbReference>
<dbReference type="PDB" id="8ZTE">
    <property type="method" value="EM"/>
    <property type="resolution" value="3.17 A"/>
    <property type="chains" value="A/B=1-598"/>
</dbReference>
<dbReference type="PDB" id="8ZTG">
    <property type="method" value="EM"/>
    <property type="resolution" value="2.95 A"/>
    <property type="chains" value="A/B=1-598"/>
</dbReference>
<dbReference type="PDB" id="8ZTH">
    <property type="method" value="EM"/>
    <property type="resolution" value="2.63 A"/>
    <property type="chains" value="A/B=1-598"/>
</dbReference>
<dbReference type="PDB" id="8ZTI">
    <property type="method" value="EM"/>
    <property type="resolution" value="2.90 A"/>
    <property type="chains" value="A/B=1-598"/>
</dbReference>
<dbReference type="PDB" id="8ZTJ">
    <property type="method" value="EM"/>
    <property type="resolution" value="2.73 A"/>
    <property type="chains" value="A/B=1-598"/>
</dbReference>
<dbReference type="PDB" id="8ZTK">
    <property type="method" value="EM"/>
    <property type="resolution" value="2.78 A"/>
    <property type="chains" value="A/B=1-598"/>
</dbReference>
<dbReference type="PDB" id="8ZTL">
    <property type="method" value="EM"/>
    <property type="resolution" value="2.75 A"/>
    <property type="chains" value="A/B=1-598"/>
</dbReference>
<dbReference type="PDB" id="8ZTM">
    <property type="method" value="EM"/>
    <property type="resolution" value="2.84 A"/>
    <property type="chains" value="A/B=1-598"/>
</dbReference>
<dbReference type="PDB" id="8ZTN">
    <property type="method" value="EM"/>
    <property type="resolution" value="2.77 A"/>
    <property type="chains" value="A/B=1-598"/>
</dbReference>
<dbReference type="PDB" id="8ZVF">
    <property type="method" value="EM"/>
    <property type="resolution" value="3.59 A"/>
    <property type="chains" value="A/B=1-598"/>
</dbReference>
<dbReference type="PDBsum" id="8HIW"/>
<dbReference type="PDBsum" id="8HIY"/>
<dbReference type="PDBsum" id="8ZTE"/>
<dbReference type="PDBsum" id="8ZTG"/>
<dbReference type="PDBsum" id="8ZTH"/>
<dbReference type="PDBsum" id="8ZTI"/>
<dbReference type="PDBsum" id="8ZTJ"/>
<dbReference type="PDBsum" id="8ZTK"/>
<dbReference type="PDBsum" id="8ZTL"/>
<dbReference type="PDBsum" id="8ZTM"/>
<dbReference type="PDBsum" id="8ZTN"/>
<dbReference type="PDBsum" id="8ZVF"/>
<dbReference type="EMDB" id="EMD-34828"/>
<dbReference type="EMDB" id="EMD-34829"/>
<dbReference type="EMDB" id="EMD-60459"/>
<dbReference type="EMDB" id="EMD-60461"/>
<dbReference type="EMDB" id="EMD-60462"/>
<dbReference type="EMDB" id="EMD-60463"/>
<dbReference type="EMDB" id="EMD-60464"/>
<dbReference type="EMDB" id="EMD-60465"/>
<dbReference type="EMDB" id="EMD-60466"/>
<dbReference type="EMDB" id="EMD-60467"/>
<dbReference type="EMDB" id="EMD-60468"/>
<dbReference type="EMDB" id="EMD-60510"/>
<dbReference type="SMR" id="Q9LS46"/>
<dbReference type="FunCoup" id="Q9LS46">
    <property type="interactions" value="507"/>
</dbReference>
<dbReference type="STRING" id="3702.Q9LS46"/>
<dbReference type="TCDB" id="2.A.85.2.7">
    <property type="family name" value="the aromatic acid exporter (arae) family"/>
</dbReference>
<dbReference type="iPTMnet" id="Q9LS46"/>
<dbReference type="SwissPalm" id="Q9LS46"/>
<dbReference type="PaxDb" id="3702-AT3G18440.1"/>
<dbReference type="ProteomicsDB" id="244813"/>
<dbReference type="EnsemblPlants" id="AT3G18440.1">
    <property type="protein sequence ID" value="AT3G18440.1"/>
    <property type="gene ID" value="AT3G18440"/>
</dbReference>
<dbReference type="GeneID" id="821373"/>
<dbReference type="Gramene" id="AT3G18440.1">
    <property type="protein sequence ID" value="AT3G18440.1"/>
    <property type="gene ID" value="AT3G18440"/>
</dbReference>
<dbReference type="KEGG" id="ath:AT3G18440"/>
<dbReference type="Araport" id="AT3G18440"/>
<dbReference type="TAIR" id="AT3G18440">
    <property type="gene designation" value="ALMT9"/>
</dbReference>
<dbReference type="eggNOG" id="KOG4711">
    <property type="taxonomic scope" value="Eukaryota"/>
</dbReference>
<dbReference type="HOGENOM" id="CLU_020841_1_2_1"/>
<dbReference type="InParanoid" id="Q9LS46"/>
<dbReference type="OMA" id="WEMGVSD"/>
<dbReference type="PhylomeDB" id="Q9LS46"/>
<dbReference type="PRO" id="PR:Q9LS46"/>
<dbReference type="Proteomes" id="UP000006548">
    <property type="component" value="Chromosome 3"/>
</dbReference>
<dbReference type="ExpressionAtlas" id="Q9LS46">
    <property type="expression patterns" value="baseline and differential"/>
</dbReference>
<dbReference type="GO" id="GO:0009705">
    <property type="term" value="C:plant-type vacuole membrane"/>
    <property type="evidence" value="ECO:0000314"/>
    <property type="project" value="TAIR"/>
</dbReference>
<dbReference type="GO" id="GO:0005253">
    <property type="term" value="F:monoatomic anion channel activity"/>
    <property type="evidence" value="ECO:0000314"/>
    <property type="project" value="TAIR"/>
</dbReference>
<dbReference type="GO" id="GO:0015743">
    <property type="term" value="P:malate transport"/>
    <property type="evidence" value="ECO:0000315"/>
    <property type="project" value="TAIR"/>
</dbReference>
<dbReference type="InterPro" id="IPR020966">
    <property type="entry name" value="ALMT"/>
</dbReference>
<dbReference type="PANTHER" id="PTHR31086">
    <property type="entry name" value="ALUMINUM-ACTIVATED MALATE TRANSPORTER 10"/>
    <property type="match status" value="1"/>
</dbReference>
<dbReference type="Pfam" id="PF11744">
    <property type="entry name" value="ALMT"/>
    <property type="match status" value="1"/>
</dbReference>
<keyword id="KW-0002">3D-structure</keyword>
<keyword id="KW-0868">Chloride</keyword>
<keyword id="KW-0407">Ion channel</keyword>
<keyword id="KW-0406">Ion transport</keyword>
<keyword id="KW-0472">Membrane</keyword>
<keyword id="KW-1185">Reference proteome</keyword>
<keyword id="KW-0812">Transmembrane</keyword>
<keyword id="KW-1133">Transmembrane helix</keyword>
<keyword id="KW-0813">Transport</keyword>
<keyword id="KW-0926">Vacuole</keyword>
<sequence length="598" mass="67046">MAAKQGSFRHGILEKRERLLSNNGFSDFRFTDIESNDLLENENCGRRTRLCCCCSCGNLSEKISGVYDDAKDVARKAWEMGVSDPRKIVFSAKIGLALTIVALLIFYQEPNPDLSRYSVWAILTVVVVFEFTIGATLSKGFNRALGTLSAGGLALGMAELSTLFGDWEEIFCTLSIFCIGFLATFMKLYPSMKAYEYGFRVFLLTYCYILISGFRTGQFIEVAISRFLLIALGAGVSLGVNMFIYPIWAGEDLHNLVVKNFMNVATSLEGCVNGYLRCLEYERIPSKILTYQASEDPVYKGYRSAVESTSQEESLMSFAIWEPPHGPYKSFNYPWKNYVKLSGALKHCAFTVMALHGCILSEIQAPEERRQVFRQELQRVGVEGAKLLRELGEKVKKMEKLGPVDLLFEVHLAAEELQHKIDKKSYLLVNSECWEIGNRATKESEPQELLSLEDSDPPENHAPPIYAFKSLSEAVLEIPPSWGEKNHREALNHRPTFSKQVSWPARLVLPPHLETTNGASPLVETTKTYESASALSLATFASLLIEFVARLQNVVDAFKELSQKANFKEPEIVTTGTDVEFSGERVGLGQKIRRCFGM</sequence>
<organism>
    <name type="scientific">Arabidopsis thaliana</name>
    <name type="common">Mouse-ear cress</name>
    <dbReference type="NCBI Taxonomy" id="3702"/>
    <lineage>
        <taxon>Eukaryota</taxon>
        <taxon>Viridiplantae</taxon>
        <taxon>Streptophyta</taxon>
        <taxon>Embryophyta</taxon>
        <taxon>Tracheophyta</taxon>
        <taxon>Spermatophyta</taxon>
        <taxon>Magnoliopsida</taxon>
        <taxon>eudicotyledons</taxon>
        <taxon>Gunneridae</taxon>
        <taxon>Pentapetalae</taxon>
        <taxon>rosids</taxon>
        <taxon>malvids</taxon>
        <taxon>Brassicales</taxon>
        <taxon>Brassicaceae</taxon>
        <taxon>Camelineae</taxon>
        <taxon>Arabidopsis</taxon>
    </lineage>
</organism>
<reference key="1">
    <citation type="journal article" date="2000" name="DNA Res.">
        <title>Structural analysis of Arabidopsis thaliana chromosome 3. I. Sequence features of the regions of 4,504,864 bp covered by sixty P1 and TAC clones.</title>
        <authorList>
            <person name="Sato S."/>
            <person name="Nakamura Y."/>
            <person name="Kaneko T."/>
            <person name="Katoh T."/>
            <person name="Asamizu E."/>
            <person name="Tabata S."/>
        </authorList>
    </citation>
    <scope>NUCLEOTIDE SEQUENCE [LARGE SCALE GENOMIC DNA]</scope>
    <source>
        <strain>cv. Columbia</strain>
    </source>
</reference>
<reference key="2">
    <citation type="journal article" date="2017" name="Plant J.">
        <title>Araport11: a complete reannotation of the Arabidopsis thaliana reference genome.</title>
        <authorList>
            <person name="Cheng C.Y."/>
            <person name="Krishnakumar V."/>
            <person name="Chan A.P."/>
            <person name="Thibaud-Nissen F."/>
            <person name="Schobel S."/>
            <person name="Town C.D."/>
        </authorList>
    </citation>
    <scope>GENOME REANNOTATION</scope>
    <source>
        <strain>cv. Columbia</strain>
    </source>
</reference>
<reference key="3">
    <citation type="journal article" date="2003" name="Science">
        <title>Empirical analysis of transcriptional activity in the Arabidopsis genome.</title>
        <authorList>
            <person name="Yamada K."/>
            <person name="Lim J."/>
            <person name="Dale J.M."/>
            <person name="Chen H."/>
            <person name="Shinn P."/>
            <person name="Palm C.J."/>
            <person name="Southwick A.M."/>
            <person name="Wu H.C."/>
            <person name="Kim C.J."/>
            <person name="Nguyen M."/>
            <person name="Pham P.K."/>
            <person name="Cheuk R.F."/>
            <person name="Karlin-Newmann G."/>
            <person name="Liu S.X."/>
            <person name="Lam B."/>
            <person name="Sakano H."/>
            <person name="Wu T."/>
            <person name="Yu G."/>
            <person name="Miranda M."/>
            <person name="Quach H.L."/>
            <person name="Tripp M."/>
            <person name="Chang C.H."/>
            <person name="Lee J.M."/>
            <person name="Toriumi M.J."/>
            <person name="Chan M.M."/>
            <person name="Tang C.C."/>
            <person name="Onodera C.S."/>
            <person name="Deng J.M."/>
            <person name="Akiyama K."/>
            <person name="Ansari Y."/>
            <person name="Arakawa T."/>
            <person name="Banh J."/>
            <person name="Banno F."/>
            <person name="Bowser L."/>
            <person name="Brooks S.Y."/>
            <person name="Carninci P."/>
            <person name="Chao Q."/>
            <person name="Choy N."/>
            <person name="Enju A."/>
            <person name="Goldsmith A.D."/>
            <person name="Gurjal M."/>
            <person name="Hansen N.F."/>
            <person name="Hayashizaki Y."/>
            <person name="Johnson-Hopson C."/>
            <person name="Hsuan V.W."/>
            <person name="Iida K."/>
            <person name="Karnes M."/>
            <person name="Khan S."/>
            <person name="Koesema E."/>
            <person name="Ishida J."/>
            <person name="Jiang P.X."/>
            <person name="Jones T."/>
            <person name="Kawai J."/>
            <person name="Kamiya A."/>
            <person name="Meyers C."/>
            <person name="Nakajima M."/>
            <person name="Narusaka M."/>
            <person name="Seki M."/>
            <person name="Sakurai T."/>
            <person name="Satou M."/>
            <person name="Tamse R."/>
            <person name="Vaysberg M."/>
            <person name="Wallender E.K."/>
            <person name="Wong C."/>
            <person name="Yamamura Y."/>
            <person name="Yuan S."/>
            <person name="Shinozaki K."/>
            <person name="Davis R.W."/>
            <person name="Theologis A."/>
            <person name="Ecker J.R."/>
        </authorList>
    </citation>
    <scope>NUCLEOTIDE SEQUENCE [LARGE SCALE MRNA]</scope>
    <source>
        <strain>cv. Columbia</strain>
    </source>
</reference>
<reference key="4">
    <citation type="journal article" date="2006" name="Proc. Natl. Acad. Sci. U.S.A.">
        <title>AtALMT1, which encodes a malate transporter, is identified as one of several genes critical for aluminum tolerance in Arabidopsis.</title>
        <authorList>
            <person name="Hoekenga O.A."/>
            <person name="Maron L.G."/>
            <person name="Pineros M.A."/>
            <person name="Cancado G.M."/>
            <person name="Shaff J."/>
            <person name="Kobayashi Y."/>
            <person name="Ryan P.R."/>
            <person name="Dong B."/>
            <person name="Delhaize E."/>
            <person name="Sasaki T."/>
            <person name="Matsumoto H."/>
            <person name="Yamamoto Y."/>
            <person name="Koyama H."/>
            <person name="Kochian L.V."/>
        </authorList>
    </citation>
    <scope>GENE FAMILY</scope>
    <scope>NOMENCLATURE</scope>
</reference>
<reference key="5">
    <citation type="journal article" date="2007" name="Plant J.">
        <title>The Arabidopsis vacuolar malate channel is a member of the ALMT family.</title>
        <authorList>
            <person name="Kovermann P."/>
            <person name="Meyer S."/>
            <person name="Hoertensteiner S."/>
            <person name="Picco C."/>
            <person name="Scholz-Starke J."/>
            <person name="Ravera S."/>
            <person name="Lee Y."/>
            <person name="Martinoia E."/>
        </authorList>
    </citation>
    <scope>FUNCTION</scope>
    <scope>SUBCELLULAR LOCATION</scope>
    <scope>TISSUE SPECIFICITY</scope>
    <scope>ACTIVITY REGULATION</scope>
    <scope>DISRUPTION PHENOTYPE</scope>
</reference>
<evidence type="ECO:0000255" key="1"/>
<evidence type="ECO:0000269" key="2">
    <source>
    </source>
</evidence>
<evidence type="ECO:0000305" key="3"/>
<evidence type="ECO:0007829" key="4">
    <source>
        <dbReference type="PDB" id="8HIW"/>
    </source>
</evidence>
<protein>
    <recommendedName>
        <fullName>Aluminum-activated malate transporter 9</fullName>
        <shortName>AtALMT9</shortName>
    </recommendedName>
</protein>
<feature type="chain" id="PRO_0000401468" description="Aluminum-activated malate transporter 9">
    <location>
        <begin position="1"/>
        <end position="598"/>
    </location>
</feature>
<feature type="transmembrane region" description="Helical" evidence="1">
    <location>
        <begin position="88"/>
        <end position="108"/>
    </location>
</feature>
<feature type="transmembrane region" description="Helical" evidence="1">
    <location>
        <begin position="117"/>
        <end position="137"/>
    </location>
</feature>
<feature type="transmembrane region" description="Helical" evidence="1">
    <location>
        <begin position="144"/>
        <end position="164"/>
    </location>
</feature>
<feature type="transmembrane region" description="Helical" evidence="1">
    <location>
        <begin position="170"/>
        <end position="190"/>
    </location>
</feature>
<feature type="transmembrane region" description="Helical" evidence="1">
    <location>
        <begin position="194"/>
        <end position="214"/>
    </location>
</feature>
<feature type="transmembrane region" description="Helical" evidence="1">
    <location>
        <begin position="227"/>
        <end position="247"/>
    </location>
</feature>
<feature type="helix" evidence="4">
    <location>
        <begin position="68"/>
        <end position="83"/>
    </location>
</feature>
<feature type="helix" evidence="4">
    <location>
        <begin position="87"/>
        <end position="108"/>
    </location>
</feature>
<feature type="strand" evidence="4">
    <location>
        <begin position="112"/>
        <end position="114"/>
    </location>
</feature>
<feature type="helix" evidence="4">
    <location>
        <begin position="118"/>
        <end position="127"/>
    </location>
</feature>
<feature type="helix" evidence="4">
    <location>
        <begin position="133"/>
        <end position="162"/>
    </location>
</feature>
<feature type="helix" evidence="4">
    <location>
        <begin position="168"/>
        <end position="188"/>
    </location>
</feature>
<feature type="strand" evidence="4">
    <location>
        <begin position="189"/>
        <end position="191"/>
    </location>
</feature>
<feature type="helix" evidence="4">
    <location>
        <begin position="196"/>
        <end position="215"/>
    </location>
</feature>
<feature type="helix" evidence="4">
    <location>
        <begin position="219"/>
        <end position="243"/>
    </location>
</feature>
<feature type="helix" evidence="4">
    <location>
        <begin position="251"/>
        <end position="257"/>
    </location>
</feature>
<feature type="helix" evidence="4">
    <location>
        <begin position="259"/>
        <end position="274"/>
    </location>
</feature>
<feature type="helix" evidence="4">
    <location>
        <begin position="299"/>
        <end position="306"/>
    </location>
</feature>
<feature type="helix" evidence="4">
    <location>
        <begin position="309"/>
        <end position="312"/>
    </location>
</feature>
<feature type="helix" evidence="4">
    <location>
        <begin position="315"/>
        <end position="319"/>
    </location>
</feature>
<feature type="strand" evidence="4">
    <location>
        <begin position="330"/>
        <end position="332"/>
    </location>
</feature>
<feature type="turn" evidence="4">
    <location>
        <begin position="338"/>
        <end position="340"/>
    </location>
</feature>
<feature type="helix" evidence="4">
    <location>
        <begin position="341"/>
        <end position="348"/>
    </location>
</feature>
<feature type="helix" evidence="4">
    <location>
        <begin position="351"/>
        <end position="360"/>
    </location>
</feature>
<feature type="strand" evidence="4">
    <location>
        <begin position="361"/>
        <end position="363"/>
    </location>
</feature>
<feature type="helix" evidence="4">
    <location>
        <begin position="367"/>
        <end position="370"/>
    </location>
</feature>
<feature type="helix" evidence="4">
    <location>
        <begin position="374"/>
        <end position="396"/>
    </location>
</feature>
<feature type="helix" evidence="4">
    <location>
        <begin position="408"/>
        <end position="423"/>
    </location>
</feature>
<feature type="turn" evidence="4">
    <location>
        <begin position="426"/>
        <end position="428"/>
    </location>
</feature>
<feature type="turn" evidence="4">
    <location>
        <begin position="530"/>
        <end position="533"/>
    </location>
</feature>
<feature type="helix" evidence="4">
    <location>
        <begin position="534"/>
        <end position="536"/>
    </location>
</feature>
<feature type="helix" evidence="4">
    <location>
        <begin position="538"/>
        <end position="541"/>
    </location>
</feature>
<feature type="turn" evidence="4">
    <location>
        <begin position="542"/>
        <end position="544"/>
    </location>
</feature>
<feature type="helix" evidence="4">
    <location>
        <begin position="545"/>
        <end position="564"/>
    </location>
</feature>
<gene>
    <name type="primary">ALMT9</name>
    <name type="ordered locus">At3g18440</name>
    <name type="ORF">MYF24.16</name>
</gene>
<proteinExistence type="evidence at protein level"/>
<comment type="function">
    <text evidence="2">Vacuolar malate channel. Has a higher selectivity for malate than for fumarate. Also exhibits a weak chloride conductance.</text>
</comment>
<comment type="activity regulation">
    <text evidence="2">Slow activation by external aluminum.</text>
</comment>
<comment type="subcellular location">
    <subcellularLocation>
        <location evidence="3">Vacuole membrane</location>
        <topology evidence="3">Multi-pass membrane protein</topology>
    </subcellularLocation>
</comment>
<comment type="tissue specificity">
    <text evidence="2">Expressed in hypocotyls, leaves, roots, flowers, sepals and stamina. In leaves, expressed almost exclusively in mesophyll cells.</text>
</comment>
<comment type="disruption phenotype">
    <text evidence="2">No visible phenotype.</text>
</comment>
<comment type="similarity">
    <text evidence="3">Belongs to the aromatic acid exporter (TC 2.A.85) family.</text>
</comment>
<name>ALMT9_ARATH</name>